<keyword id="KW-0963">Cytoplasm</keyword>
<keyword id="KW-0690">Ribosome biogenesis</keyword>
<evidence type="ECO:0000255" key="1">
    <source>
        <dbReference type="HAMAP-Rule" id="MF_01077"/>
    </source>
</evidence>
<protein>
    <recommendedName>
        <fullName evidence="1">Ribosome maturation factor RimP</fullName>
    </recommendedName>
</protein>
<organism>
    <name type="scientific">Streptococcus pyogenes serotype M2 (strain MGAS10270)</name>
    <dbReference type="NCBI Taxonomy" id="370552"/>
    <lineage>
        <taxon>Bacteria</taxon>
        <taxon>Bacillati</taxon>
        <taxon>Bacillota</taxon>
        <taxon>Bacilli</taxon>
        <taxon>Lactobacillales</taxon>
        <taxon>Streptococcaceae</taxon>
        <taxon>Streptococcus</taxon>
    </lineage>
</organism>
<gene>
    <name evidence="1" type="primary">rimP</name>
    <name type="ordered locus">MGAS10270_Spy1534</name>
</gene>
<dbReference type="EMBL" id="CP000260">
    <property type="protein sequence ID" value="ABF34599.1"/>
    <property type="molecule type" value="Genomic_DNA"/>
</dbReference>
<dbReference type="SMR" id="Q1JFG0"/>
<dbReference type="KEGG" id="sph:MGAS10270_Spy1534"/>
<dbReference type="HOGENOM" id="CLU_070525_2_0_9"/>
<dbReference type="Proteomes" id="UP000002436">
    <property type="component" value="Chromosome"/>
</dbReference>
<dbReference type="GO" id="GO:0005829">
    <property type="term" value="C:cytosol"/>
    <property type="evidence" value="ECO:0007669"/>
    <property type="project" value="TreeGrafter"/>
</dbReference>
<dbReference type="GO" id="GO:0000028">
    <property type="term" value="P:ribosomal small subunit assembly"/>
    <property type="evidence" value="ECO:0007669"/>
    <property type="project" value="TreeGrafter"/>
</dbReference>
<dbReference type="GO" id="GO:0006412">
    <property type="term" value="P:translation"/>
    <property type="evidence" value="ECO:0007669"/>
    <property type="project" value="TreeGrafter"/>
</dbReference>
<dbReference type="CDD" id="cd01734">
    <property type="entry name" value="YlxS_C"/>
    <property type="match status" value="1"/>
</dbReference>
<dbReference type="Gene3D" id="2.30.30.180">
    <property type="entry name" value="Ribosome maturation factor RimP, C-terminal domain"/>
    <property type="match status" value="1"/>
</dbReference>
<dbReference type="Gene3D" id="3.30.300.70">
    <property type="entry name" value="RimP-like superfamily, N-terminal"/>
    <property type="match status" value="1"/>
</dbReference>
<dbReference type="HAMAP" id="MF_01077">
    <property type="entry name" value="RimP"/>
    <property type="match status" value="1"/>
</dbReference>
<dbReference type="InterPro" id="IPR003728">
    <property type="entry name" value="Ribosome_maturation_RimP"/>
</dbReference>
<dbReference type="InterPro" id="IPR028998">
    <property type="entry name" value="RimP_C"/>
</dbReference>
<dbReference type="InterPro" id="IPR036847">
    <property type="entry name" value="RimP_C_sf"/>
</dbReference>
<dbReference type="InterPro" id="IPR028989">
    <property type="entry name" value="RimP_N"/>
</dbReference>
<dbReference type="InterPro" id="IPR035956">
    <property type="entry name" value="RimP_N_sf"/>
</dbReference>
<dbReference type="NCBIfam" id="NF000928">
    <property type="entry name" value="PRK00092.1-2"/>
    <property type="match status" value="1"/>
</dbReference>
<dbReference type="PANTHER" id="PTHR33867">
    <property type="entry name" value="RIBOSOME MATURATION FACTOR RIMP"/>
    <property type="match status" value="1"/>
</dbReference>
<dbReference type="PANTHER" id="PTHR33867:SF1">
    <property type="entry name" value="RIBOSOME MATURATION FACTOR RIMP"/>
    <property type="match status" value="1"/>
</dbReference>
<dbReference type="Pfam" id="PF17384">
    <property type="entry name" value="DUF150_C"/>
    <property type="match status" value="1"/>
</dbReference>
<dbReference type="Pfam" id="PF02576">
    <property type="entry name" value="RimP_N"/>
    <property type="match status" value="1"/>
</dbReference>
<dbReference type="SUPFAM" id="SSF74942">
    <property type="entry name" value="YhbC-like, C-terminal domain"/>
    <property type="match status" value="1"/>
</dbReference>
<dbReference type="SUPFAM" id="SSF75420">
    <property type="entry name" value="YhbC-like, N-terminal domain"/>
    <property type="match status" value="1"/>
</dbReference>
<sequence length="178" mass="19689">MDSQGPIILEKSIKIEEVIKIANTSIIDIVTKTVTPEIKAPYELVDVEYDKMGSDYILSILVDKEGGITVEDTSDLTNIISPLLDTIDPDPFPNQYMLEVSSPGLERPLKTADSLKAAVGSYINVSLYQAIDKVKVFQGDLLAFDGETLTIDYLDKTRHKIVNIPYQAVAKVRMAVKL</sequence>
<feature type="chain" id="PRO_1000064783" description="Ribosome maturation factor RimP">
    <location>
        <begin position="1"/>
        <end position="178"/>
    </location>
</feature>
<proteinExistence type="inferred from homology"/>
<comment type="function">
    <text evidence="1">Required for maturation of 30S ribosomal subunits.</text>
</comment>
<comment type="subcellular location">
    <subcellularLocation>
        <location evidence="1">Cytoplasm</location>
    </subcellularLocation>
</comment>
<comment type="similarity">
    <text evidence="1">Belongs to the RimP family.</text>
</comment>
<reference key="1">
    <citation type="journal article" date="2006" name="Proc. Natl. Acad. Sci. U.S.A.">
        <title>Molecular genetic anatomy of inter- and intraserotype variation in the human bacterial pathogen group A Streptococcus.</title>
        <authorList>
            <person name="Beres S.B."/>
            <person name="Richter E.W."/>
            <person name="Nagiec M.J."/>
            <person name="Sumby P."/>
            <person name="Porcella S.F."/>
            <person name="DeLeo F.R."/>
            <person name="Musser J.M."/>
        </authorList>
    </citation>
    <scope>NUCLEOTIDE SEQUENCE [LARGE SCALE GENOMIC DNA]</scope>
    <source>
        <strain>MGAS10270</strain>
    </source>
</reference>
<name>RIMP_STRPD</name>
<accession>Q1JFG0</accession>